<accession>Q4UMK9</accession>
<name>RL34_RICFE</name>
<evidence type="ECO:0000255" key="1">
    <source>
        <dbReference type="HAMAP-Rule" id="MF_00391"/>
    </source>
</evidence>
<evidence type="ECO:0000256" key="2">
    <source>
        <dbReference type="SAM" id="MobiDB-lite"/>
    </source>
</evidence>
<evidence type="ECO:0000305" key="3"/>
<keyword id="KW-0687">Ribonucleoprotein</keyword>
<keyword id="KW-0689">Ribosomal protein</keyword>
<feature type="chain" id="PRO_0000277957" description="Large ribosomal subunit protein bL34">
    <location>
        <begin position="1"/>
        <end position="44"/>
    </location>
</feature>
<feature type="region of interest" description="Disordered" evidence="2">
    <location>
        <begin position="1"/>
        <end position="44"/>
    </location>
</feature>
<feature type="compositionally biased region" description="Basic residues" evidence="2">
    <location>
        <begin position="30"/>
        <end position="44"/>
    </location>
</feature>
<comment type="similarity">
    <text evidence="1">Belongs to the bacterial ribosomal protein bL34 family.</text>
</comment>
<gene>
    <name evidence="1" type="primary">rpmH</name>
    <name type="ordered locus">RF_0348</name>
</gene>
<protein>
    <recommendedName>
        <fullName evidence="1">Large ribosomal subunit protein bL34</fullName>
    </recommendedName>
    <alternativeName>
        <fullName evidence="3">50S ribosomal protein L34</fullName>
    </alternativeName>
</protein>
<dbReference type="EMBL" id="CP000053">
    <property type="protein sequence ID" value="AAY61199.1"/>
    <property type="molecule type" value="Genomic_DNA"/>
</dbReference>
<dbReference type="SMR" id="Q4UMK9"/>
<dbReference type="STRING" id="315456.RF_0348"/>
<dbReference type="KEGG" id="rfe:RF_0348"/>
<dbReference type="eggNOG" id="COG0230">
    <property type="taxonomic scope" value="Bacteria"/>
</dbReference>
<dbReference type="HOGENOM" id="CLU_129938_2_0_5"/>
<dbReference type="OrthoDB" id="9804164at2"/>
<dbReference type="Proteomes" id="UP000008548">
    <property type="component" value="Chromosome"/>
</dbReference>
<dbReference type="GO" id="GO:1990904">
    <property type="term" value="C:ribonucleoprotein complex"/>
    <property type="evidence" value="ECO:0007669"/>
    <property type="project" value="UniProtKB-KW"/>
</dbReference>
<dbReference type="GO" id="GO:0005840">
    <property type="term" value="C:ribosome"/>
    <property type="evidence" value="ECO:0007669"/>
    <property type="project" value="UniProtKB-KW"/>
</dbReference>
<dbReference type="GO" id="GO:0003735">
    <property type="term" value="F:structural constituent of ribosome"/>
    <property type="evidence" value="ECO:0007669"/>
    <property type="project" value="InterPro"/>
</dbReference>
<dbReference type="GO" id="GO:0006412">
    <property type="term" value="P:translation"/>
    <property type="evidence" value="ECO:0007669"/>
    <property type="project" value="UniProtKB-UniRule"/>
</dbReference>
<dbReference type="FunFam" id="1.10.287.3980:FF:000001">
    <property type="entry name" value="Mitochondrial ribosomal protein L34"/>
    <property type="match status" value="1"/>
</dbReference>
<dbReference type="Gene3D" id="1.10.287.3980">
    <property type="match status" value="1"/>
</dbReference>
<dbReference type="HAMAP" id="MF_00391">
    <property type="entry name" value="Ribosomal_bL34"/>
    <property type="match status" value="1"/>
</dbReference>
<dbReference type="InterPro" id="IPR000271">
    <property type="entry name" value="Ribosomal_bL34"/>
</dbReference>
<dbReference type="InterPro" id="IPR020939">
    <property type="entry name" value="Ribosomal_bL34_CS"/>
</dbReference>
<dbReference type="NCBIfam" id="TIGR01030">
    <property type="entry name" value="rpmH_bact"/>
    <property type="match status" value="1"/>
</dbReference>
<dbReference type="PANTHER" id="PTHR14503:SF4">
    <property type="entry name" value="LARGE RIBOSOMAL SUBUNIT PROTEIN BL34M"/>
    <property type="match status" value="1"/>
</dbReference>
<dbReference type="PANTHER" id="PTHR14503">
    <property type="entry name" value="MITOCHONDRIAL RIBOSOMAL PROTEIN 34 FAMILY MEMBER"/>
    <property type="match status" value="1"/>
</dbReference>
<dbReference type="Pfam" id="PF00468">
    <property type="entry name" value="Ribosomal_L34"/>
    <property type="match status" value="1"/>
</dbReference>
<dbReference type="PROSITE" id="PS00784">
    <property type="entry name" value="RIBOSOMAL_L34"/>
    <property type="match status" value="1"/>
</dbReference>
<proteinExistence type="inferred from homology"/>
<sequence length="44" mass="5216">MKRTFQPSNLVRKRRHGFRSRMATPTGRAILRKRRAKGRHKLSA</sequence>
<organism>
    <name type="scientific">Rickettsia felis (strain ATCC VR-1525 / URRWXCal2)</name>
    <name type="common">Rickettsia azadi</name>
    <dbReference type="NCBI Taxonomy" id="315456"/>
    <lineage>
        <taxon>Bacteria</taxon>
        <taxon>Pseudomonadati</taxon>
        <taxon>Pseudomonadota</taxon>
        <taxon>Alphaproteobacteria</taxon>
        <taxon>Rickettsiales</taxon>
        <taxon>Rickettsiaceae</taxon>
        <taxon>Rickettsieae</taxon>
        <taxon>Rickettsia</taxon>
        <taxon>spotted fever group</taxon>
    </lineage>
</organism>
<reference key="1">
    <citation type="journal article" date="2005" name="PLoS Biol.">
        <title>The genome sequence of Rickettsia felis identifies the first putative conjugative plasmid in an obligate intracellular parasite.</title>
        <authorList>
            <person name="Ogata H."/>
            <person name="Renesto P."/>
            <person name="Audic S."/>
            <person name="Robert C."/>
            <person name="Blanc G."/>
            <person name="Fournier P.-E."/>
            <person name="Parinello H."/>
            <person name="Claverie J.-M."/>
            <person name="Raoult D."/>
        </authorList>
    </citation>
    <scope>NUCLEOTIDE SEQUENCE [LARGE SCALE GENOMIC DNA]</scope>
    <source>
        <strain>ATCC VR-1525 / URRWXCal2</strain>
    </source>
</reference>